<comment type="function">
    <text evidence="2">Catalyzes the conversion of the nucleoside breakdown products ribose-1-phosphate and deoxyribose-1-phosphate to the corresponding 5-phosphopentoses (By similarity). Catalyzes the reversible isomerization of alpha-D-glucose 1-phosphate to alpha-D-glucose 6-phosphate but with a lower catalytic efficiency (By similarity). The mechanism proceeds via the intermediate compound alpha-D-glucose 1,6-bisphosphate (By similarity). In vitro, also has a low glucose 1,6-bisphosphate synthase activity which is most probably not physiologically relevant (By similarity).</text>
</comment>
<comment type="catalytic activity">
    <reaction evidence="2">
        <text>alpha-D-ribose 1-phosphate = D-ribose 5-phosphate</text>
        <dbReference type="Rhea" id="RHEA:18793"/>
        <dbReference type="ChEBI" id="CHEBI:57720"/>
        <dbReference type="ChEBI" id="CHEBI:78346"/>
        <dbReference type="EC" id="5.4.2.7"/>
    </reaction>
</comment>
<comment type="catalytic activity">
    <reaction evidence="2">
        <text>2-deoxy-alpha-D-ribose 1-phosphate = 2-deoxy-D-ribose 5-phosphate</text>
        <dbReference type="Rhea" id="RHEA:27658"/>
        <dbReference type="ChEBI" id="CHEBI:57259"/>
        <dbReference type="ChEBI" id="CHEBI:62877"/>
        <dbReference type="EC" id="5.4.2.7"/>
    </reaction>
</comment>
<comment type="catalytic activity">
    <reaction evidence="2">
        <text>alpha-D-glucose 1-phosphate = alpha-D-glucose 6-phosphate</text>
        <dbReference type="Rhea" id="RHEA:23536"/>
        <dbReference type="ChEBI" id="CHEBI:58225"/>
        <dbReference type="ChEBI" id="CHEBI:58601"/>
        <dbReference type="EC" id="5.4.2.2"/>
    </reaction>
</comment>
<comment type="catalytic activity">
    <reaction evidence="2">
        <text>O-phospho-L-seryl-[protein] + alpha-D-glucose 1-phosphate = alpha-D-glucose 1,6-bisphosphate + L-seryl-[protein]</text>
        <dbReference type="Rhea" id="RHEA:68748"/>
        <dbReference type="Rhea" id="RHEA-COMP:9863"/>
        <dbReference type="Rhea" id="RHEA-COMP:11604"/>
        <dbReference type="ChEBI" id="CHEBI:29999"/>
        <dbReference type="ChEBI" id="CHEBI:58392"/>
        <dbReference type="ChEBI" id="CHEBI:58601"/>
        <dbReference type="ChEBI" id="CHEBI:83421"/>
    </reaction>
</comment>
<comment type="catalytic activity">
    <reaction evidence="2">
        <text>alpha-D-glucose 1,6-bisphosphate + L-seryl-[protein] = O-phospho-L-seryl-[protein] + alpha-D-glucose 6-phosphate</text>
        <dbReference type="Rhea" id="RHEA:68752"/>
        <dbReference type="Rhea" id="RHEA-COMP:9863"/>
        <dbReference type="Rhea" id="RHEA-COMP:11604"/>
        <dbReference type="ChEBI" id="CHEBI:29999"/>
        <dbReference type="ChEBI" id="CHEBI:58225"/>
        <dbReference type="ChEBI" id="CHEBI:58392"/>
        <dbReference type="ChEBI" id="CHEBI:83421"/>
    </reaction>
</comment>
<comment type="cofactor">
    <cofactor evidence="1">
        <name>Mg(2+)</name>
        <dbReference type="ChEBI" id="CHEBI:18420"/>
    </cofactor>
    <text evidence="1">Binds 1 Mg(2+) ion per subunit.</text>
</comment>
<comment type="subunit">
    <text evidence="1">Monomer.</text>
</comment>
<comment type="subcellular location">
    <subcellularLocation>
        <location evidence="2">Cytoplasm</location>
        <location evidence="2">Cytosol</location>
    </subcellularLocation>
</comment>
<comment type="tissue specificity">
    <text evidence="3">Highly expressed in lung, spleen and thymus. Expressed at lower levels in liver, brain, kidney, skeletal muscle, testis and heart.</text>
</comment>
<comment type="similarity">
    <text evidence="4">Belongs to the phosphohexose mutase family.</text>
</comment>
<comment type="caution">
    <text evidence="4">There is a known reversal of the Pgm1 and Pgm2 nomenclature applied to mouse versus other vertebrates. The official name of this gene in mouse is Pgm1 but it is the ortholog of other vertebrate PGM2 genes.</text>
</comment>
<organism>
    <name type="scientific">Mus musculus</name>
    <name type="common">Mouse</name>
    <dbReference type="NCBI Taxonomy" id="10090"/>
    <lineage>
        <taxon>Eukaryota</taxon>
        <taxon>Metazoa</taxon>
        <taxon>Chordata</taxon>
        <taxon>Craniata</taxon>
        <taxon>Vertebrata</taxon>
        <taxon>Euteleostomi</taxon>
        <taxon>Mammalia</taxon>
        <taxon>Eutheria</taxon>
        <taxon>Euarchontoglires</taxon>
        <taxon>Glires</taxon>
        <taxon>Rodentia</taxon>
        <taxon>Myomorpha</taxon>
        <taxon>Muroidea</taxon>
        <taxon>Muridae</taxon>
        <taxon>Murinae</taxon>
        <taxon>Mus</taxon>
        <taxon>Mus</taxon>
    </lineage>
</organism>
<proteinExistence type="evidence at protein level"/>
<name>PGM2_MOUSE</name>
<feature type="chain" id="PRO_0000147782" description="Phosphopentomutase">
    <location>
        <begin position="1"/>
        <end position="620"/>
    </location>
</feature>
<feature type="active site" description="Phosphoserine intermediate" evidence="1">
    <location>
        <position position="173"/>
    </location>
</feature>
<feature type="binding site" evidence="1">
    <location>
        <position position="71"/>
    </location>
    <ligand>
        <name>alpha-D-glucose 1,6-bisphosphate</name>
        <dbReference type="ChEBI" id="CHEBI:58392"/>
    </ligand>
</feature>
<feature type="binding site" evidence="1">
    <location>
        <position position="173"/>
    </location>
    <ligand>
        <name>alpha-D-glucose 1,6-bisphosphate</name>
        <dbReference type="ChEBI" id="CHEBI:58392"/>
    </ligand>
</feature>
<feature type="binding site" description="via phosphate group" evidence="1">
    <location>
        <position position="173"/>
    </location>
    <ligand>
        <name>Mg(2+)</name>
        <dbReference type="ChEBI" id="CHEBI:18420"/>
    </ligand>
</feature>
<feature type="binding site" evidence="1">
    <location>
        <position position="330"/>
    </location>
    <ligand>
        <name>Mg(2+)</name>
        <dbReference type="ChEBI" id="CHEBI:18420"/>
    </ligand>
</feature>
<feature type="binding site" evidence="1">
    <location>
        <position position="332"/>
    </location>
    <ligand>
        <name>Mg(2+)</name>
        <dbReference type="ChEBI" id="CHEBI:18420"/>
    </ligand>
</feature>
<feature type="binding site" evidence="1">
    <location>
        <position position="334"/>
    </location>
    <ligand>
        <name>alpha-D-glucose 1,6-bisphosphate</name>
        <dbReference type="ChEBI" id="CHEBI:58392"/>
    </ligand>
</feature>
<feature type="binding site" evidence="1">
    <location>
        <position position="334"/>
    </location>
    <ligand>
        <name>Mg(2+)</name>
        <dbReference type="ChEBI" id="CHEBI:18420"/>
    </ligand>
</feature>
<feature type="binding site" evidence="1">
    <location>
        <position position="335"/>
    </location>
    <ligand>
        <name>alpha-D-glucose 1,6-bisphosphate</name>
        <dbReference type="ChEBI" id="CHEBI:58392"/>
    </ligand>
</feature>
<feature type="binding site" evidence="1">
    <location>
        <position position="408"/>
    </location>
    <ligand>
        <name>alpha-D-glucose 1,6-bisphosphate</name>
        <dbReference type="ChEBI" id="CHEBI:58392"/>
    </ligand>
</feature>
<feature type="binding site" evidence="1">
    <location>
        <position position="432"/>
    </location>
    <ligand>
        <name>alpha-D-glucose 1,6-bisphosphate</name>
        <dbReference type="ChEBI" id="CHEBI:58392"/>
    </ligand>
</feature>
<feature type="binding site" evidence="1">
    <location>
        <position position="446"/>
    </location>
    <ligand>
        <name>alpha-D-glucose 1,6-bisphosphate</name>
        <dbReference type="ChEBI" id="CHEBI:58392"/>
    </ligand>
</feature>
<feature type="modified residue" description="Phosphoserine" evidence="6 7">
    <location>
        <position position="173"/>
    </location>
</feature>
<reference key="1">
    <citation type="journal article" date="2004" name="Genome Res.">
        <title>The status, quality, and expansion of the NIH full-length cDNA project: the Mammalian Gene Collection (MGC).</title>
        <authorList>
            <consortium name="The MGC Project Team"/>
        </authorList>
    </citation>
    <scope>NUCLEOTIDE SEQUENCE [LARGE SCALE MRNA]</scope>
    <source>
        <strain>FVB/N</strain>
        <tissue>Colon</tissue>
        <tissue>Limb</tissue>
    </source>
</reference>
<reference key="2">
    <citation type="journal article" date="2005" name="Science">
        <title>The transcriptional landscape of the mammalian genome.</title>
        <authorList>
            <person name="Carninci P."/>
            <person name="Kasukawa T."/>
            <person name="Katayama S."/>
            <person name="Gough J."/>
            <person name="Frith M.C."/>
            <person name="Maeda N."/>
            <person name="Oyama R."/>
            <person name="Ravasi T."/>
            <person name="Lenhard B."/>
            <person name="Wells C."/>
            <person name="Kodzius R."/>
            <person name="Shimokawa K."/>
            <person name="Bajic V.B."/>
            <person name="Brenner S.E."/>
            <person name="Batalov S."/>
            <person name="Forrest A.R."/>
            <person name="Zavolan M."/>
            <person name="Davis M.J."/>
            <person name="Wilming L.G."/>
            <person name="Aidinis V."/>
            <person name="Allen J.E."/>
            <person name="Ambesi-Impiombato A."/>
            <person name="Apweiler R."/>
            <person name="Aturaliya R.N."/>
            <person name="Bailey T.L."/>
            <person name="Bansal M."/>
            <person name="Baxter L."/>
            <person name="Beisel K.W."/>
            <person name="Bersano T."/>
            <person name="Bono H."/>
            <person name="Chalk A.M."/>
            <person name="Chiu K.P."/>
            <person name="Choudhary V."/>
            <person name="Christoffels A."/>
            <person name="Clutterbuck D.R."/>
            <person name="Crowe M.L."/>
            <person name="Dalla E."/>
            <person name="Dalrymple B.P."/>
            <person name="de Bono B."/>
            <person name="Della Gatta G."/>
            <person name="di Bernardo D."/>
            <person name="Down T."/>
            <person name="Engstrom P."/>
            <person name="Fagiolini M."/>
            <person name="Faulkner G."/>
            <person name="Fletcher C.F."/>
            <person name="Fukushima T."/>
            <person name="Furuno M."/>
            <person name="Futaki S."/>
            <person name="Gariboldi M."/>
            <person name="Georgii-Hemming P."/>
            <person name="Gingeras T.R."/>
            <person name="Gojobori T."/>
            <person name="Green R.E."/>
            <person name="Gustincich S."/>
            <person name="Harbers M."/>
            <person name="Hayashi Y."/>
            <person name="Hensch T.K."/>
            <person name="Hirokawa N."/>
            <person name="Hill D."/>
            <person name="Huminiecki L."/>
            <person name="Iacono M."/>
            <person name="Ikeo K."/>
            <person name="Iwama A."/>
            <person name="Ishikawa T."/>
            <person name="Jakt M."/>
            <person name="Kanapin A."/>
            <person name="Katoh M."/>
            <person name="Kawasawa Y."/>
            <person name="Kelso J."/>
            <person name="Kitamura H."/>
            <person name="Kitano H."/>
            <person name="Kollias G."/>
            <person name="Krishnan S.P."/>
            <person name="Kruger A."/>
            <person name="Kummerfeld S.K."/>
            <person name="Kurochkin I.V."/>
            <person name="Lareau L.F."/>
            <person name="Lazarevic D."/>
            <person name="Lipovich L."/>
            <person name="Liu J."/>
            <person name="Liuni S."/>
            <person name="McWilliam S."/>
            <person name="Madan Babu M."/>
            <person name="Madera M."/>
            <person name="Marchionni L."/>
            <person name="Matsuda H."/>
            <person name="Matsuzawa S."/>
            <person name="Miki H."/>
            <person name="Mignone F."/>
            <person name="Miyake S."/>
            <person name="Morris K."/>
            <person name="Mottagui-Tabar S."/>
            <person name="Mulder N."/>
            <person name="Nakano N."/>
            <person name="Nakauchi H."/>
            <person name="Ng P."/>
            <person name="Nilsson R."/>
            <person name="Nishiguchi S."/>
            <person name="Nishikawa S."/>
            <person name="Nori F."/>
            <person name="Ohara O."/>
            <person name="Okazaki Y."/>
            <person name="Orlando V."/>
            <person name="Pang K.C."/>
            <person name="Pavan W.J."/>
            <person name="Pavesi G."/>
            <person name="Pesole G."/>
            <person name="Petrovsky N."/>
            <person name="Piazza S."/>
            <person name="Reed J."/>
            <person name="Reid J.F."/>
            <person name="Ring B.Z."/>
            <person name="Ringwald M."/>
            <person name="Rost B."/>
            <person name="Ruan Y."/>
            <person name="Salzberg S.L."/>
            <person name="Sandelin A."/>
            <person name="Schneider C."/>
            <person name="Schoenbach C."/>
            <person name="Sekiguchi K."/>
            <person name="Semple C.A."/>
            <person name="Seno S."/>
            <person name="Sessa L."/>
            <person name="Sheng Y."/>
            <person name="Shibata Y."/>
            <person name="Shimada H."/>
            <person name="Shimada K."/>
            <person name="Silva D."/>
            <person name="Sinclair B."/>
            <person name="Sperling S."/>
            <person name="Stupka E."/>
            <person name="Sugiura K."/>
            <person name="Sultana R."/>
            <person name="Takenaka Y."/>
            <person name="Taki K."/>
            <person name="Tammoja K."/>
            <person name="Tan S.L."/>
            <person name="Tang S."/>
            <person name="Taylor M.S."/>
            <person name="Tegner J."/>
            <person name="Teichmann S.A."/>
            <person name="Ueda H.R."/>
            <person name="van Nimwegen E."/>
            <person name="Verardo R."/>
            <person name="Wei C.L."/>
            <person name="Yagi K."/>
            <person name="Yamanishi H."/>
            <person name="Zabarovsky E."/>
            <person name="Zhu S."/>
            <person name="Zimmer A."/>
            <person name="Hide W."/>
            <person name="Bult C."/>
            <person name="Grimmond S.M."/>
            <person name="Teasdale R.D."/>
            <person name="Liu E.T."/>
            <person name="Brusic V."/>
            <person name="Quackenbush J."/>
            <person name="Wahlestedt C."/>
            <person name="Mattick J.S."/>
            <person name="Hume D.A."/>
            <person name="Kai C."/>
            <person name="Sasaki D."/>
            <person name="Tomaru Y."/>
            <person name="Fukuda S."/>
            <person name="Kanamori-Katayama M."/>
            <person name="Suzuki M."/>
            <person name="Aoki J."/>
            <person name="Arakawa T."/>
            <person name="Iida J."/>
            <person name="Imamura K."/>
            <person name="Itoh M."/>
            <person name="Kato T."/>
            <person name="Kawaji H."/>
            <person name="Kawagashira N."/>
            <person name="Kawashima T."/>
            <person name="Kojima M."/>
            <person name="Kondo S."/>
            <person name="Konno H."/>
            <person name="Nakano K."/>
            <person name="Ninomiya N."/>
            <person name="Nishio T."/>
            <person name="Okada M."/>
            <person name="Plessy C."/>
            <person name="Shibata K."/>
            <person name="Shiraki T."/>
            <person name="Suzuki S."/>
            <person name="Tagami M."/>
            <person name="Waki K."/>
            <person name="Watahiki A."/>
            <person name="Okamura-Oho Y."/>
            <person name="Suzuki H."/>
            <person name="Kawai J."/>
            <person name="Hayashizaki Y."/>
        </authorList>
    </citation>
    <scope>NUCLEOTIDE SEQUENCE [LARGE SCALE MRNA] OF 15-620</scope>
    <source>
        <strain>C57BL/6J</strain>
        <tissue>Head</tissue>
    </source>
</reference>
<reference key="3">
    <citation type="journal article" date="2007" name="J. Biol. Chem.">
        <title>Molecular identification of mammalian phosphopentomutase and glucose-1,6-bisphosphate synthase, two members of the alpha-D-phosphohexomutase family.</title>
        <authorList>
            <person name="Maliekal P."/>
            <person name="Sokolova T."/>
            <person name="Vertommen D."/>
            <person name="Veiga-da-Cunha M."/>
            <person name="Van Schaftingen E."/>
        </authorList>
    </citation>
    <scope>TISSUE SPECIFICITY</scope>
</reference>
<reference key="4">
    <citation type="journal article" date="2009" name="Mol. Cell. Proteomics">
        <title>Large scale localization of protein phosphorylation by use of electron capture dissociation mass spectrometry.</title>
        <authorList>
            <person name="Sweet S.M."/>
            <person name="Bailey C.M."/>
            <person name="Cunningham D.L."/>
            <person name="Heath J.K."/>
            <person name="Cooper H.J."/>
        </authorList>
    </citation>
    <scope>PHOSPHORYLATION [LARGE SCALE ANALYSIS] AT SER-173</scope>
    <scope>IDENTIFICATION BY MASS SPECTROMETRY [LARGE SCALE ANALYSIS]</scope>
    <source>
        <tissue>Embryonic fibroblast</tissue>
    </source>
</reference>
<reference key="5">
    <citation type="journal article" date="2010" name="Cell">
        <title>A tissue-specific atlas of mouse protein phosphorylation and expression.</title>
        <authorList>
            <person name="Huttlin E.L."/>
            <person name="Jedrychowski M.P."/>
            <person name="Elias J.E."/>
            <person name="Goswami T."/>
            <person name="Rad R."/>
            <person name="Beausoleil S.A."/>
            <person name="Villen J."/>
            <person name="Haas W."/>
            <person name="Sowa M.E."/>
            <person name="Gygi S.P."/>
        </authorList>
    </citation>
    <scope>PHOSPHORYLATION [LARGE SCALE ANALYSIS] AT SER-173</scope>
    <scope>IDENTIFICATION BY MASS SPECTROMETRY [LARGE SCALE ANALYSIS]</scope>
    <source>
        <tissue>Brain</tissue>
        <tissue>Brown adipose tissue</tissue>
        <tissue>Heart</tissue>
        <tissue>Kidney</tissue>
        <tissue>Liver</tissue>
        <tissue>Lung</tissue>
        <tissue>Pancreas</tissue>
        <tissue>Spleen</tissue>
        <tissue>Testis</tissue>
    </source>
</reference>
<accession>Q7TSV4</accession>
<accession>Q8K0P7</accession>
<accession>Q9CRS8</accession>
<protein>
    <recommendedName>
        <fullName evidence="4">Phosphopentomutase</fullName>
        <ecNumber evidence="2">5.4.2.7</ecNumber>
    </recommendedName>
    <alternativeName>
        <fullName>Glucose phosphomutase 2</fullName>
    </alternativeName>
    <alternativeName>
        <fullName>Phosphodeoxyribomutase</fullName>
    </alternativeName>
    <alternativeName>
        <fullName>Phosphoglucomutase-1</fullName>
    </alternativeName>
    <alternativeName>
        <fullName evidence="4">Phosphoglucomutase-2</fullName>
        <shortName>PGM 2</shortName>
        <ecNumber evidence="2">5.4.2.2</ecNumber>
    </alternativeName>
</protein>
<keyword id="KW-0119">Carbohydrate metabolism</keyword>
<keyword id="KW-0963">Cytoplasm</keyword>
<keyword id="KW-0313">Glucose metabolism</keyword>
<keyword id="KW-0413">Isomerase</keyword>
<keyword id="KW-0460">Magnesium</keyword>
<keyword id="KW-0479">Metal-binding</keyword>
<keyword id="KW-0597">Phosphoprotein</keyword>
<keyword id="KW-1185">Reference proteome</keyword>
<dbReference type="EC" id="5.4.2.7" evidence="2"/>
<dbReference type="EC" id="5.4.2.2" evidence="2"/>
<dbReference type="EMBL" id="BC030869">
    <property type="protein sequence ID" value="AAH30869.1"/>
    <property type="molecule type" value="mRNA"/>
</dbReference>
<dbReference type="EMBL" id="BC052762">
    <property type="protein sequence ID" value="AAH52762.1"/>
    <property type="molecule type" value="mRNA"/>
</dbReference>
<dbReference type="EMBL" id="AK014332">
    <property type="protein sequence ID" value="BAB29278.1"/>
    <property type="molecule type" value="mRNA"/>
</dbReference>
<dbReference type="CCDS" id="CCDS19300.1"/>
<dbReference type="RefSeq" id="NP_079976.1">
    <property type="nucleotide sequence ID" value="NM_025700.4"/>
</dbReference>
<dbReference type="SMR" id="Q7TSV4"/>
<dbReference type="BioGRID" id="211641">
    <property type="interactions" value="1"/>
</dbReference>
<dbReference type="FunCoup" id="Q7TSV4">
    <property type="interactions" value="1981"/>
</dbReference>
<dbReference type="STRING" id="10090.ENSMUSP00000084582"/>
<dbReference type="GlyGen" id="Q7TSV4">
    <property type="glycosylation" value="1 site"/>
</dbReference>
<dbReference type="iPTMnet" id="Q7TSV4"/>
<dbReference type="PhosphoSitePlus" id="Q7TSV4"/>
<dbReference type="SwissPalm" id="Q7TSV4"/>
<dbReference type="jPOST" id="Q7TSV4"/>
<dbReference type="PaxDb" id="10090-ENSMUSP00000084582"/>
<dbReference type="PeptideAtlas" id="Q7TSV4"/>
<dbReference type="ProteomicsDB" id="288183"/>
<dbReference type="Pumba" id="Q7TSV4"/>
<dbReference type="Antibodypedia" id="23314">
    <property type="antibodies" value="105 antibodies from 25 providers"/>
</dbReference>
<dbReference type="Ensembl" id="ENSMUST00000087324.7">
    <property type="protein sequence ID" value="ENSMUSP00000084582.6"/>
    <property type="gene ID" value="ENSMUSG00000029171.13"/>
</dbReference>
<dbReference type="GeneID" id="66681"/>
<dbReference type="KEGG" id="mmu:66681"/>
<dbReference type="UCSC" id="uc008xmi.1">
    <property type="organism name" value="mouse"/>
</dbReference>
<dbReference type="AGR" id="MGI:97564"/>
<dbReference type="CTD" id="55276"/>
<dbReference type="MGI" id="MGI:97564">
    <property type="gene designation" value="Pgm2"/>
</dbReference>
<dbReference type="VEuPathDB" id="HostDB:ENSMUSG00000029171"/>
<dbReference type="eggNOG" id="KOG1220">
    <property type="taxonomic scope" value="Eukaryota"/>
</dbReference>
<dbReference type="GeneTree" id="ENSGT00940000156247"/>
<dbReference type="HOGENOM" id="CLU_016950_0_1_1"/>
<dbReference type="InParanoid" id="Q7TSV4"/>
<dbReference type="OMA" id="GYCVDPE"/>
<dbReference type="OrthoDB" id="8300170at2759"/>
<dbReference type="PhylomeDB" id="Q7TSV4"/>
<dbReference type="TreeFam" id="TF300692"/>
<dbReference type="Reactome" id="R-MMU-6798695">
    <property type="pathway name" value="Neutrophil degranulation"/>
</dbReference>
<dbReference type="Reactome" id="R-MMU-71336">
    <property type="pathway name" value="Pentose phosphate pathway"/>
</dbReference>
<dbReference type="BioGRID-ORCS" id="66681">
    <property type="hits" value="2 hits in 77 CRISPR screens"/>
</dbReference>
<dbReference type="ChiTaRS" id="Pgm2">
    <property type="organism name" value="mouse"/>
</dbReference>
<dbReference type="PRO" id="PR:Q7TSV4"/>
<dbReference type="Proteomes" id="UP000000589">
    <property type="component" value="Chromosome 5"/>
</dbReference>
<dbReference type="RNAct" id="Q7TSV4">
    <property type="molecule type" value="protein"/>
</dbReference>
<dbReference type="Bgee" id="ENSMUSG00000029171">
    <property type="expression patterns" value="Expressed in small intestine Peyer's patch and 251 other cell types or tissues"/>
</dbReference>
<dbReference type="ExpressionAtlas" id="Q7TSV4">
    <property type="expression patterns" value="baseline and differential"/>
</dbReference>
<dbReference type="GO" id="GO:0005829">
    <property type="term" value="C:cytosol"/>
    <property type="evidence" value="ECO:0000250"/>
    <property type="project" value="UniProtKB"/>
</dbReference>
<dbReference type="GO" id="GO:0000287">
    <property type="term" value="F:magnesium ion binding"/>
    <property type="evidence" value="ECO:0007669"/>
    <property type="project" value="InterPro"/>
</dbReference>
<dbReference type="GO" id="GO:0004614">
    <property type="term" value="F:phosphoglucomutase activity"/>
    <property type="evidence" value="ECO:0000314"/>
    <property type="project" value="MGI"/>
</dbReference>
<dbReference type="GO" id="GO:0008973">
    <property type="term" value="F:phosphopentomutase activity"/>
    <property type="evidence" value="ECO:0000250"/>
    <property type="project" value="UniProtKB"/>
</dbReference>
<dbReference type="GO" id="GO:0006006">
    <property type="term" value="P:glucose metabolic process"/>
    <property type="evidence" value="ECO:0000314"/>
    <property type="project" value="MGI"/>
</dbReference>
<dbReference type="GO" id="GO:0005978">
    <property type="term" value="P:glycogen biosynthetic process"/>
    <property type="evidence" value="ECO:0000316"/>
    <property type="project" value="MGI"/>
</dbReference>
<dbReference type="GO" id="GO:0005980">
    <property type="term" value="P:glycogen catabolic process"/>
    <property type="evidence" value="ECO:0000315"/>
    <property type="project" value="MGI"/>
</dbReference>
<dbReference type="CDD" id="cd05799">
    <property type="entry name" value="PGM2"/>
    <property type="match status" value="1"/>
</dbReference>
<dbReference type="FunFam" id="3.40.120.10:FF:000016">
    <property type="entry name" value="Glucose 1,6-bisphosphate synthase"/>
    <property type="match status" value="1"/>
</dbReference>
<dbReference type="FunFam" id="3.40.120.10:FF:000018">
    <property type="entry name" value="Glucose 1,6-bisphosphate synthase"/>
    <property type="match status" value="1"/>
</dbReference>
<dbReference type="FunFam" id="3.40.120.10:FF:000017">
    <property type="entry name" value="glucose 1,6-bisphosphate synthase"/>
    <property type="match status" value="1"/>
</dbReference>
<dbReference type="Gene3D" id="3.40.120.10">
    <property type="entry name" value="Alpha-D-Glucose-1,6-Bisphosphate, subunit A, domain 3"/>
    <property type="match status" value="3"/>
</dbReference>
<dbReference type="InterPro" id="IPR005844">
    <property type="entry name" value="A-D-PHexomutase_a/b/a-I"/>
</dbReference>
<dbReference type="InterPro" id="IPR016055">
    <property type="entry name" value="A-D-PHexomutase_a/b/a-I/II/III"/>
</dbReference>
<dbReference type="InterPro" id="IPR005845">
    <property type="entry name" value="A-D-PHexomutase_a/b/a-II"/>
</dbReference>
<dbReference type="InterPro" id="IPR005846">
    <property type="entry name" value="A-D-PHexomutase_a/b/a-III"/>
</dbReference>
<dbReference type="InterPro" id="IPR036900">
    <property type="entry name" value="A-D-PHexomutase_C_sf"/>
</dbReference>
<dbReference type="InterPro" id="IPR016066">
    <property type="entry name" value="A-D-PHexomutase_CS"/>
</dbReference>
<dbReference type="PANTHER" id="PTHR45745">
    <property type="entry name" value="PHOSPHOMANNOMUTASE 45A"/>
    <property type="match status" value="1"/>
</dbReference>
<dbReference type="PANTHER" id="PTHR45745:SF3">
    <property type="entry name" value="PHOSPHOPENTOMUTASE"/>
    <property type="match status" value="1"/>
</dbReference>
<dbReference type="Pfam" id="PF02878">
    <property type="entry name" value="PGM_PMM_I"/>
    <property type="match status" value="1"/>
</dbReference>
<dbReference type="Pfam" id="PF02879">
    <property type="entry name" value="PGM_PMM_II"/>
    <property type="match status" value="1"/>
</dbReference>
<dbReference type="Pfam" id="PF02880">
    <property type="entry name" value="PGM_PMM_III"/>
    <property type="match status" value="1"/>
</dbReference>
<dbReference type="SUPFAM" id="SSF55957">
    <property type="entry name" value="Phosphoglucomutase, C-terminal domain"/>
    <property type="match status" value="1"/>
</dbReference>
<dbReference type="SUPFAM" id="SSF53738">
    <property type="entry name" value="Phosphoglucomutase, first 3 domains"/>
    <property type="match status" value="3"/>
</dbReference>
<dbReference type="PROSITE" id="PS00710">
    <property type="entry name" value="PGM_PMM"/>
    <property type="match status" value="1"/>
</dbReference>
<sequence length="620" mass="68748">MAAATPTETPAPEGSGLGMDARLDQETAQWLRWDQNPLTSESVKQLIAGGNKEELRKCFGARMEFGTAGLRAPMGAGISRMNDLTIIQTTQGFCRYLEKQFSDLKQRGVVISFDARAHPASGGSSRRFARLAATAFITQGVPVYLFSDITPTPFVPYTVSHLKLCAGIMITASHNPKQDNGYKVYWDNGAQIISPHDRGISQAIEENLEPWPQAWEESLVDSSPLLHNPSASIGNDYFEDLKKYCFHRTVNKESKVKFVHTSVHGVGHEFVQLAFKAFDLAPPEAVPQQKDPDPEFPTVKYPNPEEGKGVLTLSFALADKIKAKIVLANDPDADRLAVAEKQDSGEWRVFSGNELGALLGWWLFTSWKEKNQDQSNLKDTYMLSSTVSSKILRAIALKEGFHFEETLTGFKWMGNRAQQLGDQGKTVLFAFEEAIGYMCCPFVLDKDGVSAAVICAELASFLATKNLSLSQQLNAIYVEYGYHITTASYFICHDQGTIQNLFGNLRNYDGKNNYPKMCGKFEISAIRDLTTGYDDSQPDKKAVLPTSKSSQMITFTFANGGVATMRTSGTEPKIKYYAELCAPPGNSDPEHLKKELDELVGAIEEHFFQPQKYNLQPKAE</sequence>
<gene>
    <name evidence="5" type="primary">Pgm2</name>
    <name type="synonym">Pgm1</name>
</gene>
<evidence type="ECO:0000250" key="1">
    <source>
        <dbReference type="UniProtKB" id="P00949"/>
    </source>
</evidence>
<evidence type="ECO:0000250" key="2">
    <source>
        <dbReference type="UniProtKB" id="Q96G03"/>
    </source>
</evidence>
<evidence type="ECO:0000269" key="3">
    <source>
    </source>
</evidence>
<evidence type="ECO:0000305" key="4"/>
<evidence type="ECO:0000312" key="5">
    <source>
        <dbReference type="MGI" id="MGI:97564"/>
    </source>
</evidence>
<evidence type="ECO:0007744" key="6">
    <source>
    </source>
</evidence>
<evidence type="ECO:0007744" key="7">
    <source>
    </source>
</evidence>